<sequence>MKANELREKSAQQLNEQLLGLLRDQFNLRMQKATGQLGQSHLLSQVKRDIARVKTVLNQQAGK</sequence>
<reference key="1">
    <citation type="journal article" date="2003" name="Proc. Natl. Acad. Sci. U.S.A.">
        <title>The complete genome sequence of the Arabidopsis and tomato pathogen Pseudomonas syringae pv. tomato DC3000.</title>
        <authorList>
            <person name="Buell C.R."/>
            <person name="Joardar V."/>
            <person name="Lindeberg M."/>
            <person name="Selengut J."/>
            <person name="Paulsen I.T."/>
            <person name="Gwinn M.L."/>
            <person name="Dodson R.J."/>
            <person name="DeBoy R.T."/>
            <person name="Durkin A.S."/>
            <person name="Kolonay J.F."/>
            <person name="Madupu R."/>
            <person name="Daugherty S.C."/>
            <person name="Brinkac L.M."/>
            <person name="Beanan M.J."/>
            <person name="Haft D.H."/>
            <person name="Nelson W.C."/>
            <person name="Davidsen T.M."/>
            <person name="Zafar N."/>
            <person name="Zhou L."/>
            <person name="Liu J."/>
            <person name="Yuan Q."/>
            <person name="Khouri H.M."/>
            <person name="Fedorova N.B."/>
            <person name="Tran B."/>
            <person name="Russell D."/>
            <person name="Berry K.J."/>
            <person name="Utterback T.R."/>
            <person name="Van Aken S.E."/>
            <person name="Feldblyum T.V."/>
            <person name="D'Ascenzo M."/>
            <person name="Deng W.-L."/>
            <person name="Ramos A.R."/>
            <person name="Alfano J.R."/>
            <person name="Cartinhour S."/>
            <person name="Chatterjee A.K."/>
            <person name="Delaney T.P."/>
            <person name="Lazarowitz S.G."/>
            <person name="Martin G.B."/>
            <person name="Schneider D.J."/>
            <person name="Tang X."/>
            <person name="Bender C.L."/>
            <person name="White O."/>
            <person name="Fraser C.M."/>
            <person name="Collmer A."/>
        </authorList>
    </citation>
    <scope>NUCLEOTIDE SEQUENCE [LARGE SCALE GENOMIC DNA]</scope>
    <source>
        <strain>ATCC BAA-871 / DC3000</strain>
    </source>
</reference>
<gene>
    <name evidence="1" type="primary">rpmC</name>
    <name type="ordered locus">PSPTO_0634</name>
</gene>
<proteinExistence type="inferred from homology"/>
<dbReference type="EMBL" id="AE016853">
    <property type="protein sequence ID" value="AAO54176.1"/>
    <property type="molecule type" value="Genomic_DNA"/>
</dbReference>
<dbReference type="RefSeq" id="NP_790481.1">
    <property type="nucleotide sequence ID" value="NC_004578.1"/>
</dbReference>
<dbReference type="RefSeq" id="WP_002555481.1">
    <property type="nucleotide sequence ID" value="NC_004578.1"/>
</dbReference>
<dbReference type="SMR" id="Q889W3"/>
<dbReference type="STRING" id="223283.PSPTO_0634"/>
<dbReference type="GeneID" id="98285430"/>
<dbReference type="KEGG" id="pst:PSPTO_0634"/>
<dbReference type="PATRIC" id="fig|223283.9.peg.640"/>
<dbReference type="eggNOG" id="COG0255">
    <property type="taxonomic scope" value="Bacteria"/>
</dbReference>
<dbReference type="HOGENOM" id="CLU_158491_1_2_6"/>
<dbReference type="OrthoDB" id="9815192at2"/>
<dbReference type="PhylomeDB" id="Q889W3"/>
<dbReference type="PRO" id="PR:Q889W3"/>
<dbReference type="Proteomes" id="UP000002515">
    <property type="component" value="Chromosome"/>
</dbReference>
<dbReference type="GO" id="GO:0022625">
    <property type="term" value="C:cytosolic large ribosomal subunit"/>
    <property type="evidence" value="ECO:0007669"/>
    <property type="project" value="TreeGrafter"/>
</dbReference>
<dbReference type="GO" id="GO:0003735">
    <property type="term" value="F:structural constituent of ribosome"/>
    <property type="evidence" value="ECO:0007669"/>
    <property type="project" value="InterPro"/>
</dbReference>
<dbReference type="GO" id="GO:0006412">
    <property type="term" value="P:translation"/>
    <property type="evidence" value="ECO:0007669"/>
    <property type="project" value="UniProtKB-UniRule"/>
</dbReference>
<dbReference type="CDD" id="cd00427">
    <property type="entry name" value="Ribosomal_L29_HIP"/>
    <property type="match status" value="1"/>
</dbReference>
<dbReference type="FunFam" id="1.10.287.310:FF:000001">
    <property type="entry name" value="50S ribosomal protein L29"/>
    <property type="match status" value="1"/>
</dbReference>
<dbReference type="Gene3D" id="1.10.287.310">
    <property type="match status" value="1"/>
</dbReference>
<dbReference type="HAMAP" id="MF_00374">
    <property type="entry name" value="Ribosomal_uL29"/>
    <property type="match status" value="1"/>
</dbReference>
<dbReference type="InterPro" id="IPR050063">
    <property type="entry name" value="Ribosomal_protein_uL29"/>
</dbReference>
<dbReference type="InterPro" id="IPR001854">
    <property type="entry name" value="Ribosomal_uL29"/>
</dbReference>
<dbReference type="InterPro" id="IPR018254">
    <property type="entry name" value="Ribosomal_uL29_CS"/>
</dbReference>
<dbReference type="InterPro" id="IPR036049">
    <property type="entry name" value="Ribosomal_uL29_sf"/>
</dbReference>
<dbReference type="NCBIfam" id="TIGR00012">
    <property type="entry name" value="L29"/>
    <property type="match status" value="1"/>
</dbReference>
<dbReference type="PANTHER" id="PTHR10916">
    <property type="entry name" value="60S RIBOSOMAL PROTEIN L35/50S RIBOSOMAL PROTEIN L29"/>
    <property type="match status" value="1"/>
</dbReference>
<dbReference type="PANTHER" id="PTHR10916:SF0">
    <property type="entry name" value="LARGE RIBOSOMAL SUBUNIT PROTEIN UL29C"/>
    <property type="match status" value="1"/>
</dbReference>
<dbReference type="Pfam" id="PF00831">
    <property type="entry name" value="Ribosomal_L29"/>
    <property type="match status" value="1"/>
</dbReference>
<dbReference type="SUPFAM" id="SSF46561">
    <property type="entry name" value="Ribosomal protein L29 (L29p)"/>
    <property type="match status" value="1"/>
</dbReference>
<dbReference type="PROSITE" id="PS00579">
    <property type="entry name" value="RIBOSOMAL_L29"/>
    <property type="match status" value="1"/>
</dbReference>
<name>RL29_PSESM</name>
<organism>
    <name type="scientific">Pseudomonas syringae pv. tomato (strain ATCC BAA-871 / DC3000)</name>
    <dbReference type="NCBI Taxonomy" id="223283"/>
    <lineage>
        <taxon>Bacteria</taxon>
        <taxon>Pseudomonadati</taxon>
        <taxon>Pseudomonadota</taxon>
        <taxon>Gammaproteobacteria</taxon>
        <taxon>Pseudomonadales</taxon>
        <taxon>Pseudomonadaceae</taxon>
        <taxon>Pseudomonas</taxon>
    </lineage>
</organism>
<comment type="similarity">
    <text evidence="1">Belongs to the universal ribosomal protein uL29 family.</text>
</comment>
<feature type="chain" id="PRO_0000130439" description="Large ribosomal subunit protein uL29">
    <location>
        <begin position="1"/>
        <end position="63"/>
    </location>
</feature>
<keyword id="KW-1185">Reference proteome</keyword>
<keyword id="KW-0687">Ribonucleoprotein</keyword>
<keyword id="KW-0689">Ribosomal protein</keyword>
<accession>Q889W3</accession>
<evidence type="ECO:0000255" key="1">
    <source>
        <dbReference type="HAMAP-Rule" id="MF_00374"/>
    </source>
</evidence>
<evidence type="ECO:0000305" key="2"/>
<protein>
    <recommendedName>
        <fullName evidence="1">Large ribosomal subunit protein uL29</fullName>
    </recommendedName>
    <alternativeName>
        <fullName evidence="2">50S ribosomal protein L29</fullName>
    </alternativeName>
</protein>